<organism>
    <name type="scientific">Locusta migratoria</name>
    <name type="common">Migratory locust</name>
    <dbReference type="NCBI Taxonomy" id="7004"/>
    <lineage>
        <taxon>Eukaryota</taxon>
        <taxon>Metazoa</taxon>
        <taxon>Ecdysozoa</taxon>
        <taxon>Arthropoda</taxon>
        <taxon>Hexapoda</taxon>
        <taxon>Insecta</taxon>
        <taxon>Pterygota</taxon>
        <taxon>Neoptera</taxon>
        <taxon>Polyneoptera</taxon>
        <taxon>Orthoptera</taxon>
        <taxon>Caelifera</taxon>
        <taxon>Acrididea</taxon>
        <taxon>Acridomorpha</taxon>
        <taxon>Acridoidea</taxon>
        <taxon>Acrididae</taxon>
        <taxon>Oedipodinae</taxon>
        <taxon>Locusta</taxon>
    </lineage>
</organism>
<protein>
    <recommendedName>
        <fullName>Cuticle protein 32</fullName>
    </recommendedName>
    <alternativeName>
        <fullName>LM-ACP 32</fullName>
        <shortName>LM-32</shortName>
    </alternativeName>
</protein>
<dbReference type="PIR" id="E24802">
    <property type="entry name" value="E24802"/>
</dbReference>
<dbReference type="SMR" id="P11736"/>
<dbReference type="GO" id="GO:0042302">
    <property type="term" value="F:structural constituent of cuticle"/>
    <property type="evidence" value="ECO:0007669"/>
    <property type="project" value="UniProtKB-KW"/>
</dbReference>
<reference key="1">
    <citation type="journal article" date="1986" name="Eur. J. Biochem.">
        <title>Isolation, characterization, and N-terminal sequence studies of cuticular proteins from the migratory locust, Locusta migratoria.</title>
        <authorList>
            <person name="Hoejrup P."/>
            <person name="Andersen S.O."/>
            <person name="Roepstorff P."/>
        </authorList>
    </citation>
    <scope>PROTEIN SEQUENCE</scope>
</reference>
<sequence>GLLGLGYGGYGYGAALAAPAAVSYAAPAIAAAPAVSYAAPA</sequence>
<comment type="function">
    <text>Component of the cuticle of migratory locust which contains more than 100 different structural proteins.</text>
</comment>
<comment type="domain">
    <text>The tetrapeptide (A-A-P-[AV]) repeats found throughout the protein are also present in many proteins constituting the protective envelope of other species.</text>
</comment>
<accession>P11736</accession>
<proteinExistence type="evidence at protein level"/>
<keyword id="KW-0193">Cuticle</keyword>
<keyword id="KW-0903">Direct protein sequencing</keyword>
<keyword id="KW-0677">Repeat</keyword>
<name>CU32_LOCMI</name>
<feature type="chain" id="PRO_0000196103" description="Cuticle protein 32">
    <location>
        <begin position="1"/>
        <end position="41" status="greater than"/>
    </location>
</feature>
<feature type="repeat" description="1">
    <location>
        <begin position="17"/>
        <end position="20"/>
    </location>
</feature>
<feature type="repeat" description="2">
    <location>
        <begin position="25"/>
        <end position="28"/>
    </location>
</feature>
<feature type="repeat" description="3">
    <location>
        <begin position="31"/>
        <end position="34"/>
    </location>
</feature>
<feature type="repeat" description="4">
    <location>
        <begin position="38"/>
        <end position="41"/>
    </location>
</feature>
<feature type="non-terminal residue">
    <location>
        <position position="41"/>
    </location>
</feature>